<proteinExistence type="inferred from homology"/>
<feature type="signal peptide" evidence="1">
    <location>
        <begin position="1"/>
        <end position="24"/>
    </location>
</feature>
<feature type="chain" id="PRO_1000078260" description="Outer-membrane lipoprotein LolB">
    <location>
        <begin position="25"/>
        <end position="216"/>
    </location>
</feature>
<feature type="lipid moiety-binding region" description="N-palmitoyl cysteine" evidence="1">
    <location>
        <position position="25"/>
    </location>
</feature>
<feature type="lipid moiety-binding region" description="S-diacylglycerol cysteine" evidence="1">
    <location>
        <position position="25"/>
    </location>
</feature>
<keyword id="KW-0998">Cell outer membrane</keyword>
<keyword id="KW-0143">Chaperone</keyword>
<keyword id="KW-0449">Lipoprotein</keyword>
<keyword id="KW-0472">Membrane</keyword>
<keyword id="KW-0564">Palmitate</keyword>
<keyword id="KW-0653">Protein transport</keyword>
<keyword id="KW-1185">Reference proteome</keyword>
<keyword id="KW-0732">Signal</keyword>
<keyword id="KW-0813">Transport</keyword>
<sequence length="216" mass="24217">MNNLNYFTKISASCAALALMTLAGCASHKPIDYAPTQVESANQAEAWELQGKLAVRTPEDKFSTNLYWFHTQTNDDLTLTTMLGTTVMTLNKTPSQASLQIEDKVYQDSDAEELLRRLTGWSIPVDTLPLWITGQVSAQDEVVAVDEQGRPKEVLNHTGSSPWHVSFNSWQEQSGAELPRLLQLERDDIRLKLQVSQWQALTPKRASQPESTDDKQ</sequence>
<reference key="1">
    <citation type="submission" date="2007-03" db="EMBL/GenBank/DDBJ databases">
        <title>Complete sequence of Shewanella loihica PV-4.</title>
        <authorList>
            <consortium name="US DOE Joint Genome Institute"/>
            <person name="Copeland A."/>
            <person name="Lucas S."/>
            <person name="Lapidus A."/>
            <person name="Barry K."/>
            <person name="Detter J.C."/>
            <person name="Glavina del Rio T."/>
            <person name="Hammon N."/>
            <person name="Israni S."/>
            <person name="Dalin E."/>
            <person name="Tice H."/>
            <person name="Pitluck S."/>
            <person name="Chain P."/>
            <person name="Malfatti S."/>
            <person name="Shin M."/>
            <person name="Vergez L."/>
            <person name="Schmutz J."/>
            <person name="Larimer F."/>
            <person name="Land M."/>
            <person name="Hauser L."/>
            <person name="Kyrpides N."/>
            <person name="Mikhailova N."/>
            <person name="Romine M.F."/>
            <person name="Serres G."/>
            <person name="Fredrickson J."/>
            <person name="Tiedje J."/>
            <person name="Richardson P."/>
        </authorList>
    </citation>
    <scope>NUCLEOTIDE SEQUENCE [LARGE SCALE GENOMIC DNA]</scope>
    <source>
        <strain>ATCC BAA-1088 / PV-4</strain>
    </source>
</reference>
<protein>
    <recommendedName>
        <fullName evidence="1">Outer-membrane lipoprotein LolB</fullName>
    </recommendedName>
</protein>
<gene>
    <name evidence="1" type="primary">lolB</name>
    <name type="ordered locus">Shew_2914</name>
</gene>
<accession>A3QH32</accession>
<name>LOLB_SHELP</name>
<organism>
    <name type="scientific">Shewanella loihica (strain ATCC BAA-1088 / PV-4)</name>
    <dbReference type="NCBI Taxonomy" id="323850"/>
    <lineage>
        <taxon>Bacteria</taxon>
        <taxon>Pseudomonadati</taxon>
        <taxon>Pseudomonadota</taxon>
        <taxon>Gammaproteobacteria</taxon>
        <taxon>Alteromonadales</taxon>
        <taxon>Shewanellaceae</taxon>
        <taxon>Shewanella</taxon>
    </lineage>
</organism>
<comment type="function">
    <text evidence="1">Plays a critical role in the incorporation of lipoproteins in the outer membrane after they are released by the LolA protein.</text>
</comment>
<comment type="subunit">
    <text evidence="1">Monomer.</text>
</comment>
<comment type="subcellular location">
    <subcellularLocation>
        <location evidence="1">Cell outer membrane</location>
        <topology evidence="1">Lipid-anchor</topology>
    </subcellularLocation>
</comment>
<comment type="similarity">
    <text evidence="1">Belongs to the LolB family.</text>
</comment>
<evidence type="ECO:0000255" key="1">
    <source>
        <dbReference type="HAMAP-Rule" id="MF_00233"/>
    </source>
</evidence>
<dbReference type="EMBL" id="CP000606">
    <property type="protein sequence ID" value="ABO24780.1"/>
    <property type="molecule type" value="Genomic_DNA"/>
</dbReference>
<dbReference type="RefSeq" id="WP_011866711.1">
    <property type="nucleotide sequence ID" value="NC_009092.1"/>
</dbReference>
<dbReference type="SMR" id="A3QH32"/>
<dbReference type="STRING" id="323850.Shew_2914"/>
<dbReference type="KEGG" id="slo:Shew_2914"/>
<dbReference type="eggNOG" id="COG3017">
    <property type="taxonomic scope" value="Bacteria"/>
</dbReference>
<dbReference type="HOGENOM" id="CLU_092816_1_0_6"/>
<dbReference type="OrthoDB" id="9797618at2"/>
<dbReference type="Proteomes" id="UP000001558">
    <property type="component" value="Chromosome"/>
</dbReference>
<dbReference type="GO" id="GO:0009279">
    <property type="term" value="C:cell outer membrane"/>
    <property type="evidence" value="ECO:0007669"/>
    <property type="project" value="UniProtKB-SubCell"/>
</dbReference>
<dbReference type="GO" id="GO:0044874">
    <property type="term" value="P:lipoprotein localization to outer membrane"/>
    <property type="evidence" value="ECO:0007669"/>
    <property type="project" value="UniProtKB-UniRule"/>
</dbReference>
<dbReference type="GO" id="GO:0015031">
    <property type="term" value="P:protein transport"/>
    <property type="evidence" value="ECO:0007669"/>
    <property type="project" value="UniProtKB-KW"/>
</dbReference>
<dbReference type="CDD" id="cd16326">
    <property type="entry name" value="LolB"/>
    <property type="match status" value="1"/>
</dbReference>
<dbReference type="Gene3D" id="2.50.20.10">
    <property type="entry name" value="Lipoprotein localisation LolA/LolB/LppX"/>
    <property type="match status" value="1"/>
</dbReference>
<dbReference type="HAMAP" id="MF_00233">
    <property type="entry name" value="LolB"/>
    <property type="match status" value="1"/>
</dbReference>
<dbReference type="InterPro" id="IPR029046">
    <property type="entry name" value="LolA/LolB/LppX"/>
</dbReference>
<dbReference type="InterPro" id="IPR004565">
    <property type="entry name" value="OM_lipoprot_LolB"/>
</dbReference>
<dbReference type="NCBIfam" id="TIGR00548">
    <property type="entry name" value="lolB"/>
    <property type="match status" value="1"/>
</dbReference>
<dbReference type="Pfam" id="PF03550">
    <property type="entry name" value="LolB"/>
    <property type="match status" value="1"/>
</dbReference>
<dbReference type="SUPFAM" id="SSF89392">
    <property type="entry name" value="Prokaryotic lipoproteins and lipoprotein localization factors"/>
    <property type="match status" value="1"/>
</dbReference>